<accession>Q6TUG0</accession>
<name>DJB11_RAT</name>
<feature type="signal peptide" evidence="1">
    <location>
        <begin position="1"/>
        <end position="22"/>
    </location>
</feature>
<feature type="chain" id="PRO_0000324183" description="DnaJ homolog subfamily B member 11">
    <location>
        <begin position="23"/>
        <end position="358"/>
    </location>
</feature>
<feature type="domain" description="J" evidence="3">
    <location>
        <begin position="25"/>
        <end position="90"/>
    </location>
</feature>
<feature type="modified residue" description="Phosphothreonine" evidence="2">
    <location>
        <position position="188"/>
    </location>
</feature>
<feature type="glycosylation site" description="N-linked (GlcNAc...) asparagine" evidence="4">
    <location>
        <position position="261"/>
    </location>
</feature>
<comment type="function">
    <text evidence="2">As a co-chaperone for HSPA5 it is required for proper folding, trafficking or degradation of proteins. Binds directly to both unfolded proteins that are substrates for ERAD and nascent unfolded peptide chains, but dissociates from the HSPA5-unfolded protein complex before folding is completed. May help recruiting HSPA5 and other chaperones to the substrate. Stimulates HSPA5 ATPase activity. It is necessary for maturation and correct trafficking of PKD1.</text>
</comment>
<comment type="subunit">
    <text evidence="1">Part of a large chaperone multiprotein complex comprising DNAJB11, HSP90B1, HSPA5, HYOU, PDIA2, PDIA4, PDIA6, PPIB, SDF2L1, UGGT1 and very small amounts of ERP29, but not, or at very low levels, CALR nor CANX. Binds to denatured substrates in an ATP-independent manner. Interacts via the J domain with HSPA5 in an ATP-dependent manner (By similarity).</text>
</comment>
<comment type="subcellular location">
    <subcellularLocation>
        <location evidence="1">Endoplasmic reticulum lumen</location>
    </subcellularLocation>
</comment>
<comment type="PTM">
    <text evidence="1">Contains high-mannose Endo H-sensitive carbohydrates.</text>
</comment>
<comment type="PTM">
    <text evidence="1">Cys-169, Cys-171, Cys-193 and Cys-196 form intramolecular disulfide bonds. The preferential partner for each Cys is not known (By similarity).</text>
</comment>
<proteinExistence type="evidence at transcript level"/>
<protein>
    <recommendedName>
        <fullName>DnaJ homolog subfamily B member 11</fullName>
    </recommendedName>
    <alternativeName>
        <fullName>ER-associated DNAJ</fullName>
    </alternativeName>
    <alternativeName>
        <fullName>ER-associated Hsp40 co-chaperone</fullName>
    </alternativeName>
    <alternativeName>
        <fullName>Endoplasmic reticulum DNA J domain-containing protein 3</fullName>
        <shortName>ER-resident protein ERdj3</shortName>
        <shortName>ERdj3</shortName>
        <shortName>ERj3p</shortName>
    </alternativeName>
    <alternativeName>
        <fullName>Liver regeneration-related protein LRRGT00084</fullName>
    </alternativeName>
</protein>
<reference key="1">
    <citation type="submission" date="2003-09" db="EMBL/GenBank/DDBJ databases">
        <title>Liver regeneration after PH.</title>
        <authorList>
            <person name="Xu C.S."/>
            <person name="Chang C.F."/>
            <person name="Han H.P."/>
            <person name="Wang G.P."/>
            <person name="Chai L.Q."/>
            <person name="Yuan J.Y."/>
            <person name="Yang K.J."/>
            <person name="Zhao L.F."/>
            <person name="Ma H."/>
            <person name="Wang L."/>
            <person name="Wang S.F."/>
            <person name="Xing X.K."/>
            <person name="Shen G.M."/>
            <person name="Shi J.B."/>
            <person name="Rahman S."/>
            <person name="Wang Q.N."/>
            <person name="Zhang J.B."/>
        </authorList>
    </citation>
    <scope>NUCLEOTIDE SEQUENCE [LARGE SCALE MRNA]</scope>
    <source>
        <strain>Sprague-Dawley</strain>
        <tissue>Liver</tissue>
    </source>
</reference>
<reference key="2">
    <citation type="journal article" date="2004" name="Genome Res.">
        <title>The status, quality, and expansion of the NIH full-length cDNA project: the Mammalian Gene Collection (MGC).</title>
        <authorList>
            <consortium name="The MGC Project Team"/>
        </authorList>
    </citation>
    <scope>NUCLEOTIDE SEQUENCE [LARGE SCALE MRNA]</scope>
    <source>
        <tissue>Thymus</tissue>
    </source>
</reference>
<reference key="3">
    <citation type="journal article" date="2002" name="Mol. Biol. Cell">
        <title>A subset of chaperones and folding enzymes form multiprotein complexes in endoplasmic reticulum to bind nascent proteins.</title>
        <authorList>
            <person name="Meunier L."/>
            <person name="Usherwood Y.-K."/>
            <person name="Chung K.T."/>
            <person name="Hendershot L.M."/>
        </authorList>
    </citation>
    <scope>COMPONENT OF A CHAPERONE COMPLEX</scope>
</reference>
<evidence type="ECO:0000250" key="1"/>
<evidence type="ECO:0000250" key="2">
    <source>
        <dbReference type="UniProtKB" id="Q9UBS4"/>
    </source>
</evidence>
<evidence type="ECO:0000255" key="3">
    <source>
        <dbReference type="PROSITE-ProRule" id="PRU00286"/>
    </source>
</evidence>
<evidence type="ECO:0000305" key="4"/>
<sequence>MAPQNLSTFCLLLLYLIGAVIAGRDFYKILGVPRSASIKDIKKAYRKLALQLHPDRNPDDPQAQEKFQDLGAAYEVLSDSEKRKQYDTYGEEGLKDGHQSSHGDIFSHFFGDFGFMFGGAPRQQDRNIPRGSDIIVDLEVTLEEVYAGNFVEVVRNKPVARQAPGKRKCNCRQEMRTTQLGPGRFQMTQEVVCDECPNVKLVNEERTLEVEIEPGVRDGMEYPFIGEGEPHVDGEPGDLRFRIKVVKHRIFERRGDDLYTNVTVSLVEALVGFEMDITHLDGHKVHISRDKITRPGAKLWKKGEGLPNFDNNNIKGSLIITFDVDFPKEQLTEEAKEGIKQLLKQGPVQKVYNGLQGY</sequence>
<keyword id="KW-0143">Chaperone</keyword>
<keyword id="KW-1015">Disulfide bond</keyword>
<keyword id="KW-0256">Endoplasmic reticulum</keyword>
<keyword id="KW-0325">Glycoprotein</keyword>
<keyword id="KW-0597">Phosphoprotein</keyword>
<keyword id="KW-1185">Reference proteome</keyword>
<keyword id="KW-0732">Signal</keyword>
<gene>
    <name type="primary">Dnajb11</name>
</gene>
<organism>
    <name type="scientific">Rattus norvegicus</name>
    <name type="common">Rat</name>
    <dbReference type="NCBI Taxonomy" id="10116"/>
    <lineage>
        <taxon>Eukaryota</taxon>
        <taxon>Metazoa</taxon>
        <taxon>Chordata</taxon>
        <taxon>Craniata</taxon>
        <taxon>Vertebrata</taxon>
        <taxon>Euteleostomi</taxon>
        <taxon>Mammalia</taxon>
        <taxon>Eutheria</taxon>
        <taxon>Euarchontoglires</taxon>
        <taxon>Glires</taxon>
        <taxon>Rodentia</taxon>
        <taxon>Myomorpha</taxon>
        <taxon>Muroidea</taxon>
        <taxon>Muridae</taxon>
        <taxon>Murinae</taxon>
        <taxon>Rattus</taxon>
    </lineage>
</organism>
<dbReference type="EMBL" id="AY387070">
    <property type="protein sequence ID" value="AAQ91040.1"/>
    <property type="molecule type" value="mRNA"/>
</dbReference>
<dbReference type="EMBL" id="BC093384">
    <property type="protein sequence ID" value="AAH93384.1"/>
    <property type="molecule type" value="mRNA"/>
</dbReference>
<dbReference type="RefSeq" id="NP_001015021.1">
    <property type="nucleotide sequence ID" value="NM_001015021.1"/>
</dbReference>
<dbReference type="SMR" id="Q6TUG0"/>
<dbReference type="BioGRID" id="262164">
    <property type="interactions" value="1"/>
</dbReference>
<dbReference type="FunCoup" id="Q6TUG0">
    <property type="interactions" value="3339"/>
</dbReference>
<dbReference type="IntAct" id="Q6TUG0">
    <property type="interactions" value="10"/>
</dbReference>
<dbReference type="MINT" id="Q6TUG0"/>
<dbReference type="STRING" id="10116.ENSRNOP00000002462"/>
<dbReference type="GlyCosmos" id="Q6TUG0">
    <property type="glycosylation" value="1 site, No reported glycans"/>
</dbReference>
<dbReference type="GlyGen" id="Q6TUG0">
    <property type="glycosylation" value="1 site"/>
</dbReference>
<dbReference type="PhosphoSitePlus" id="Q6TUG0"/>
<dbReference type="jPOST" id="Q6TUG0"/>
<dbReference type="PaxDb" id="10116-ENSRNOP00000002462"/>
<dbReference type="Ensembl" id="ENSRNOT00000116132.1">
    <property type="protein sequence ID" value="ENSRNOP00000084615.1"/>
    <property type="gene ID" value="ENSRNOG00000001803.7"/>
</dbReference>
<dbReference type="GeneID" id="360734"/>
<dbReference type="KEGG" id="rno:360734"/>
<dbReference type="UCSC" id="RGD:1307373">
    <property type="organism name" value="rat"/>
</dbReference>
<dbReference type="AGR" id="RGD:1307373"/>
<dbReference type="CTD" id="51726"/>
<dbReference type="RGD" id="1307373">
    <property type="gene designation" value="Dnajb11"/>
</dbReference>
<dbReference type="eggNOG" id="KOG0713">
    <property type="taxonomic scope" value="Eukaryota"/>
</dbReference>
<dbReference type="GeneTree" id="ENSGT00940000155792"/>
<dbReference type="HOGENOM" id="CLU_017633_0_0_1"/>
<dbReference type="InParanoid" id="Q6TUG0"/>
<dbReference type="OMA" id="FAGRDFY"/>
<dbReference type="OrthoDB" id="550424at2759"/>
<dbReference type="PhylomeDB" id="Q6TUG0"/>
<dbReference type="TreeFam" id="TF105144"/>
<dbReference type="PRO" id="PR:Q6TUG0"/>
<dbReference type="Proteomes" id="UP000002494">
    <property type="component" value="Chromosome 11"/>
</dbReference>
<dbReference type="Bgee" id="ENSRNOG00000001803">
    <property type="expression patterns" value="Expressed in pancreas and 20 other cell types or tissues"/>
</dbReference>
<dbReference type="GO" id="GO:0005737">
    <property type="term" value="C:cytoplasm"/>
    <property type="evidence" value="ECO:0000266"/>
    <property type="project" value="RGD"/>
</dbReference>
<dbReference type="GO" id="GO:0005783">
    <property type="term" value="C:endoplasmic reticulum"/>
    <property type="evidence" value="ECO:0000318"/>
    <property type="project" value="GO_Central"/>
</dbReference>
<dbReference type="GO" id="GO:0034663">
    <property type="term" value="C:endoplasmic reticulum chaperone complex"/>
    <property type="evidence" value="ECO:0000314"/>
    <property type="project" value="ParkinsonsUK-UCL"/>
</dbReference>
<dbReference type="GO" id="GO:0005788">
    <property type="term" value="C:endoplasmic reticulum lumen"/>
    <property type="evidence" value="ECO:0007669"/>
    <property type="project" value="UniProtKB-SubCell"/>
</dbReference>
<dbReference type="GO" id="GO:0005615">
    <property type="term" value="C:extracellular space"/>
    <property type="evidence" value="ECO:0000266"/>
    <property type="project" value="RGD"/>
</dbReference>
<dbReference type="GO" id="GO:0005634">
    <property type="term" value="C:nucleus"/>
    <property type="evidence" value="ECO:0000266"/>
    <property type="project" value="RGD"/>
</dbReference>
<dbReference type="GO" id="GO:0101031">
    <property type="term" value="C:protein folding chaperone complex"/>
    <property type="evidence" value="ECO:0000266"/>
    <property type="project" value="RGD"/>
</dbReference>
<dbReference type="GO" id="GO:0051787">
    <property type="term" value="F:misfolded protein binding"/>
    <property type="evidence" value="ECO:0000266"/>
    <property type="project" value="RGD"/>
</dbReference>
<dbReference type="GO" id="GO:0005102">
    <property type="term" value="F:signaling receptor binding"/>
    <property type="evidence" value="ECO:0000266"/>
    <property type="project" value="RGD"/>
</dbReference>
<dbReference type="GO" id="GO:0051082">
    <property type="term" value="F:unfolded protein binding"/>
    <property type="evidence" value="ECO:0000266"/>
    <property type="project" value="RGD"/>
</dbReference>
<dbReference type="GO" id="GO:0016556">
    <property type="term" value="P:mRNA modification"/>
    <property type="evidence" value="ECO:0000266"/>
    <property type="project" value="RGD"/>
</dbReference>
<dbReference type="GO" id="GO:0050768">
    <property type="term" value="P:negative regulation of neurogenesis"/>
    <property type="evidence" value="ECO:0000266"/>
    <property type="project" value="RGD"/>
</dbReference>
<dbReference type="GO" id="GO:0006457">
    <property type="term" value="P:protein folding"/>
    <property type="evidence" value="ECO:0007669"/>
    <property type="project" value="InterPro"/>
</dbReference>
<dbReference type="GO" id="GO:0051604">
    <property type="term" value="P:protein maturation"/>
    <property type="evidence" value="ECO:0000250"/>
    <property type="project" value="UniProtKB"/>
</dbReference>
<dbReference type="CDD" id="cd06257">
    <property type="entry name" value="DnaJ"/>
    <property type="match status" value="1"/>
</dbReference>
<dbReference type="CDD" id="cd10747">
    <property type="entry name" value="DnaJ_C"/>
    <property type="match status" value="1"/>
</dbReference>
<dbReference type="FunFam" id="1.10.287.110:FF:000040">
    <property type="entry name" value="dnaJ homolog subfamily B member 11"/>
    <property type="match status" value="1"/>
</dbReference>
<dbReference type="FunFam" id="2.60.260.20:FF:000013">
    <property type="entry name" value="DnaJ subfamily B member 11"/>
    <property type="match status" value="1"/>
</dbReference>
<dbReference type="Gene3D" id="1.10.287.110">
    <property type="entry name" value="DnaJ domain"/>
    <property type="match status" value="1"/>
</dbReference>
<dbReference type="Gene3D" id="2.60.260.20">
    <property type="entry name" value="Urease metallochaperone UreE, N-terminal domain"/>
    <property type="match status" value="2"/>
</dbReference>
<dbReference type="InterPro" id="IPR051736">
    <property type="entry name" value="DnaJ-B11-like"/>
</dbReference>
<dbReference type="InterPro" id="IPR002939">
    <property type="entry name" value="DnaJ_C"/>
</dbReference>
<dbReference type="InterPro" id="IPR001623">
    <property type="entry name" value="DnaJ_domain"/>
</dbReference>
<dbReference type="InterPro" id="IPR018253">
    <property type="entry name" value="DnaJ_domain_CS"/>
</dbReference>
<dbReference type="InterPro" id="IPR008971">
    <property type="entry name" value="HSP40/DnaJ_pept-bd"/>
</dbReference>
<dbReference type="InterPro" id="IPR036869">
    <property type="entry name" value="J_dom_sf"/>
</dbReference>
<dbReference type="PANTHER" id="PTHR44298">
    <property type="entry name" value="DNAJ HOMOLOG SUBFAMILY B MEMBER 11"/>
    <property type="match status" value="1"/>
</dbReference>
<dbReference type="PANTHER" id="PTHR44298:SF1">
    <property type="entry name" value="DNAJ HOMOLOG SUBFAMILY B MEMBER 11"/>
    <property type="match status" value="1"/>
</dbReference>
<dbReference type="Pfam" id="PF00226">
    <property type="entry name" value="DnaJ"/>
    <property type="match status" value="1"/>
</dbReference>
<dbReference type="Pfam" id="PF01556">
    <property type="entry name" value="DnaJ_C"/>
    <property type="match status" value="1"/>
</dbReference>
<dbReference type="PRINTS" id="PR00625">
    <property type="entry name" value="JDOMAIN"/>
</dbReference>
<dbReference type="SMART" id="SM00271">
    <property type="entry name" value="DnaJ"/>
    <property type="match status" value="1"/>
</dbReference>
<dbReference type="SUPFAM" id="SSF46565">
    <property type="entry name" value="Chaperone J-domain"/>
    <property type="match status" value="1"/>
</dbReference>
<dbReference type="SUPFAM" id="SSF49493">
    <property type="entry name" value="HSP40/DnaJ peptide-binding domain"/>
    <property type="match status" value="2"/>
</dbReference>
<dbReference type="PROSITE" id="PS00636">
    <property type="entry name" value="DNAJ_1"/>
    <property type="match status" value="1"/>
</dbReference>
<dbReference type="PROSITE" id="PS50076">
    <property type="entry name" value="DNAJ_2"/>
    <property type="match status" value="1"/>
</dbReference>